<sequence>MVSFDATEALAPYREGRGYGAILFDRERLRQADASLFSPQSWGDRARPVDAGGRGGAWFVDAPFGHSVLRQYLRGGMAARVSRDRYLWKGAGRTRSFAEFRLMRELIKRKLPVPRPLAACYLREGVGYRAALLMERLENVRSLADHAQVAGRGAPWEATGQLIARFHRAGLDHADLNAHNILFDAGGHGWLIDFDRGVLRIPATRWRERNLKRLHRSLLKLRGNRSREDVDKDYARLHRAYELAWGRGY</sequence>
<evidence type="ECO:0000255" key="1">
    <source>
        <dbReference type="HAMAP-Rule" id="MF_00521"/>
    </source>
</evidence>
<name>KDKA_XANE5</name>
<organism>
    <name type="scientific">Xanthomonas euvesicatoria pv. vesicatoria (strain 85-10)</name>
    <name type="common">Xanthomonas campestris pv. vesicatoria</name>
    <dbReference type="NCBI Taxonomy" id="316273"/>
    <lineage>
        <taxon>Bacteria</taxon>
        <taxon>Pseudomonadati</taxon>
        <taxon>Pseudomonadota</taxon>
        <taxon>Gammaproteobacteria</taxon>
        <taxon>Lysobacterales</taxon>
        <taxon>Lysobacteraceae</taxon>
        <taxon>Xanthomonas</taxon>
    </lineage>
</organism>
<dbReference type="EC" id="2.7.1.166" evidence="1"/>
<dbReference type="EMBL" id="AM039952">
    <property type="protein sequence ID" value="CAJ22734.1"/>
    <property type="molecule type" value="Genomic_DNA"/>
</dbReference>
<dbReference type="RefSeq" id="WP_011346602.1">
    <property type="nucleotide sequence ID" value="NZ_CP017190.1"/>
</dbReference>
<dbReference type="SMR" id="Q3BWM9"/>
<dbReference type="STRING" id="456327.BJD11_17160"/>
<dbReference type="KEGG" id="xcv:XCV1103"/>
<dbReference type="eggNOG" id="COG3642">
    <property type="taxonomic scope" value="Bacteria"/>
</dbReference>
<dbReference type="HOGENOM" id="CLU_094226_0_0_6"/>
<dbReference type="UniPathway" id="UPA00958"/>
<dbReference type="Proteomes" id="UP000007069">
    <property type="component" value="Chromosome"/>
</dbReference>
<dbReference type="GO" id="GO:0005886">
    <property type="term" value="C:plasma membrane"/>
    <property type="evidence" value="ECO:0007669"/>
    <property type="project" value="UniProtKB-SubCell"/>
</dbReference>
<dbReference type="GO" id="GO:0005524">
    <property type="term" value="F:ATP binding"/>
    <property type="evidence" value="ECO:0007669"/>
    <property type="project" value="UniProtKB-UniRule"/>
</dbReference>
<dbReference type="GO" id="GO:0016301">
    <property type="term" value="F:kinase activity"/>
    <property type="evidence" value="ECO:0007669"/>
    <property type="project" value="UniProtKB-KW"/>
</dbReference>
<dbReference type="GO" id="GO:0016773">
    <property type="term" value="F:phosphotransferase activity, alcohol group as acceptor"/>
    <property type="evidence" value="ECO:0007669"/>
    <property type="project" value="UniProtKB-UniRule"/>
</dbReference>
<dbReference type="GO" id="GO:0009244">
    <property type="term" value="P:lipopolysaccharide core region biosynthetic process"/>
    <property type="evidence" value="ECO:0007669"/>
    <property type="project" value="UniProtKB-UniRule"/>
</dbReference>
<dbReference type="Gene3D" id="1.10.510.10">
    <property type="entry name" value="Transferase(Phosphotransferase) domain 1"/>
    <property type="match status" value="1"/>
</dbReference>
<dbReference type="HAMAP" id="MF_00521">
    <property type="entry name" value="KDO_kinase"/>
    <property type="match status" value="1"/>
</dbReference>
<dbReference type="InterPro" id="IPR022826">
    <property type="entry name" value="KDO_kinase"/>
</dbReference>
<dbReference type="InterPro" id="IPR011009">
    <property type="entry name" value="Kinase-like_dom_sf"/>
</dbReference>
<dbReference type="NCBIfam" id="NF002475">
    <property type="entry name" value="PRK01723.1"/>
    <property type="match status" value="1"/>
</dbReference>
<dbReference type="Pfam" id="PF06293">
    <property type="entry name" value="Kdo"/>
    <property type="match status" value="1"/>
</dbReference>
<dbReference type="SUPFAM" id="SSF56112">
    <property type="entry name" value="Protein kinase-like (PK-like)"/>
    <property type="match status" value="1"/>
</dbReference>
<accession>Q3BWM9</accession>
<feature type="chain" id="PRO_0000263416" description="3-deoxy-D-manno-octulosonic acid kinase">
    <location>
        <begin position="1"/>
        <end position="249"/>
    </location>
</feature>
<feature type="active site" evidence="1">
    <location>
        <position position="175"/>
    </location>
</feature>
<proteinExistence type="inferred from homology"/>
<keyword id="KW-0067">ATP-binding</keyword>
<keyword id="KW-0997">Cell inner membrane</keyword>
<keyword id="KW-1003">Cell membrane</keyword>
<keyword id="KW-0418">Kinase</keyword>
<keyword id="KW-0448">Lipopolysaccharide biosynthesis</keyword>
<keyword id="KW-0472">Membrane</keyword>
<keyword id="KW-0547">Nucleotide-binding</keyword>
<keyword id="KW-0808">Transferase</keyword>
<comment type="function">
    <text evidence="1">Catalyzes the ATP-dependent phosphorylation of the 3-deoxy-D-manno-octulosonic acid (Kdo) residue in Kdo-lipid IV(A) at the 4-OH position.</text>
</comment>
<comment type="catalytic activity">
    <reaction evidence="1">
        <text>an alpha-Kdo-(2-&gt;6)-lipid IVA + ATP = a 4-O-phospho-alpha-Kdo-(2-&gt;6)-lipid IVA + ADP + H(+)</text>
        <dbReference type="Rhea" id="RHEA:74271"/>
        <dbReference type="ChEBI" id="CHEBI:15378"/>
        <dbReference type="ChEBI" id="CHEBI:30616"/>
        <dbReference type="ChEBI" id="CHEBI:176428"/>
        <dbReference type="ChEBI" id="CHEBI:193140"/>
        <dbReference type="ChEBI" id="CHEBI:456216"/>
        <dbReference type="EC" id="2.7.1.166"/>
    </reaction>
</comment>
<comment type="pathway">
    <text evidence="1">Bacterial outer membrane biogenesis; LPS core biosynthesis.</text>
</comment>
<comment type="subcellular location">
    <subcellularLocation>
        <location evidence="1">Cell inner membrane</location>
        <topology evidence="1">Peripheral membrane protein</topology>
        <orientation evidence="1">Cytoplasmic side</orientation>
    </subcellularLocation>
</comment>
<comment type="similarity">
    <text evidence="1">Belongs to the protein kinase superfamily. KdkA/RfaP family.</text>
</comment>
<protein>
    <recommendedName>
        <fullName evidence="1">3-deoxy-D-manno-octulosonic acid kinase</fullName>
        <shortName evidence="1">Kdo kinase</shortName>
        <ecNumber evidence="1">2.7.1.166</ecNumber>
    </recommendedName>
</protein>
<reference key="1">
    <citation type="journal article" date="2005" name="J. Bacteriol.">
        <title>Insights into genome plasticity and pathogenicity of the plant pathogenic Bacterium Xanthomonas campestris pv. vesicatoria revealed by the complete genome sequence.</title>
        <authorList>
            <person name="Thieme F."/>
            <person name="Koebnik R."/>
            <person name="Bekel T."/>
            <person name="Berger C."/>
            <person name="Boch J."/>
            <person name="Buettner D."/>
            <person name="Caldana C."/>
            <person name="Gaigalat L."/>
            <person name="Goesmann A."/>
            <person name="Kay S."/>
            <person name="Kirchner O."/>
            <person name="Lanz C."/>
            <person name="Linke B."/>
            <person name="McHardy A.C."/>
            <person name="Meyer F."/>
            <person name="Mittenhuber G."/>
            <person name="Nies D.H."/>
            <person name="Niesbach-Kloesgen U."/>
            <person name="Patschkowski T."/>
            <person name="Rueckert C."/>
            <person name="Rupp O."/>
            <person name="Schneiker S."/>
            <person name="Schuster S.C."/>
            <person name="Vorhoelter F.J."/>
            <person name="Weber E."/>
            <person name="Puehler A."/>
            <person name="Bonas U."/>
            <person name="Bartels D."/>
            <person name="Kaiser O."/>
        </authorList>
    </citation>
    <scope>NUCLEOTIDE SEQUENCE [LARGE SCALE GENOMIC DNA]</scope>
    <source>
        <strain>85-10</strain>
    </source>
</reference>
<gene>
    <name evidence="1" type="primary">kdkA</name>
    <name type="ordered locus">XCV1103</name>
</gene>